<feature type="chain" id="PRO_0000210222" description="Syntaxin-11">
    <location>
        <begin position="1"/>
        <end position="287"/>
    </location>
</feature>
<feature type="domain" description="t-SNARE coiled-coil homology" evidence="3">
    <location>
        <begin position="204"/>
        <end position="266"/>
    </location>
</feature>
<feature type="coiled-coil region" evidence="2">
    <location>
        <begin position="41"/>
        <end position="71"/>
    </location>
</feature>
<comment type="function">
    <text evidence="1">SNARE that acts to regulate protein transport between late endosomes and the trans-Golgi network.</text>
</comment>
<comment type="subunit">
    <text evidence="1">Interacts with the SNARE proteins SNAP-23 and VAMP.</text>
</comment>
<comment type="subcellular location">
    <subcellularLocation>
        <location evidence="4">Membrane</location>
        <topology evidence="4">Peripheral membrane protein</topology>
    </subcellularLocation>
    <subcellularLocation>
        <location evidence="1">Golgi apparatus</location>
        <location evidence="1">trans-Golgi network membrane</location>
        <topology evidence="1">Peripheral membrane protein</topology>
    </subcellularLocation>
</comment>
<comment type="similarity">
    <text evidence="4">Belongs to the syntaxin family.</text>
</comment>
<dbReference type="EMBL" id="AK017897">
    <property type="protein sequence ID" value="BAB30994.1"/>
    <property type="molecule type" value="mRNA"/>
</dbReference>
<dbReference type="CCDS" id="CCDS48500.1"/>
<dbReference type="RefSeq" id="NP_083351.1">
    <property type="nucleotide sequence ID" value="NM_029075.1"/>
</dbReference>
<dbReference type="SMR" id="Q9D3G5"/>
<dbReference type="FunCoup" id="Q9D3G5">
    <property type="interactions" value="261"/>
</dbReference>
<dbReference type="IntAct" id="Q9D3G5">
    <property type="interactions" value="1"/>
</dbReference>
<dbReference type="STRING" id="10090.ENSMUSP00000046243"/>
<dbReference type="iPTMnet" id="Q9D3G5"/>
<dbReference type="PhosphoSitePlus" id="Q9D3G5"/>
<dbReference type="SwissPalm" id="Q9D3G5"/>
<dbReference type="PaxDb" id="10090-ENSMUSP00000046243"/>
<dbReference type="ProteomicsDB" id="254606"/>
<dbReference type="Pumba" id="Q9D3G5"/>
<dbReference type="GeneID" id="74732"/>
<dbReference type="KEGG" id="mmu:74732"/>
<dbReference type="AGR" id="MGI:1921982"/>
<dbReference type="CTD" id="8676"/>
<dbReference type="MGI" id="MGI:1921982">
    <property type="gene designation" value="Stx11"/>
</dbReference>
<dbReference type="eggNOG" id="KOG0810">
    <property type="taxonomic scope" value="Eukaryota"/>
</dbReference>
<dbReference type="InParanoid" id="Q9D3G5"/>
<dbReference type="OrthoDB" id="10255013at2759"/>
<dbReference type="PhylomeDB" id="Q9D3G5"/>
<dbReference type="BioGRID-ORCS" id="74732">
    <property type="hits" value="4 hits in 75 CRISPR screens"/>
</dbReference>
<dbReference type="PRO" id="PR:Q9D3G5"/>
<dbReference type="Proteomes" id="UP000000589">
    <property type="component" value="Unplaced"/>
</dbReference>
<dbReference type="RNAct" id="Q9D3G5">
    <property type="molecule type" value="protein"/>
</dbReference>
<dbReference type="GO" id="GO:0005794">
    <property type="term" value="C:Golgi apparatus"/>
    <property type="evidence" value="ECO:0007669"/>
    <property type="project" value="UniProtKB-SubCell"/>
</dbReference>
<dbReference type="GO" id="GO:0016020">
    <property type="term" value="C:membrane"/>
    <property type="evidence" value="ECO:0007669"/>
    <property type="project" value="UniProtKB-SubCell"/>
</dbReference>
<dbReference type="GO" id="GO:0045335">
    <property type="term" value="C:phagocytic vesicle"/>
    <property type="evidence" value="ECO:0000314"/>
    <property type="project" value="MGI"/>
</dbReference>
<dbReference type="GO" id="GO:0005484">
    <property type="term" value="F:SNAP receptor activity"/>
    <property type="evidence" value="ECO:0007669"/>
    <property type="project" value="InterPro"/>
</dbReference>
<dbReference type="GO" id="GO:0071346">
    <property type="term" value="P:cellular response to type II interferon"/>
    <property type="evidence" value="ECO:0000314"/>
    <property type="project" value="MGI"/>
</dbReference>
<dbReference type="GO" id="GO:0043316">
    <property type="term" value="P:cytotoxic T cell degranulation"/>
    <property type="evidence" value="ECO:0000315"/>
    <property type="project" value="MGI"/>
</dbReference>
<dbReference type="GO" id="GO:0006886">
    <property type="term" value="P:intracellular protein transport"/>
    <property type="evidence" value="ECO:0007669"/>
    <property type="project" value="InterPro"/>
</dbReference>
<dbReference type="GO" id="GO:0043320">
    <property type="term" value="P:natural killer cell degranulation"/>
    <property type="evidence" value="ECO:0000315"/>
    <property type="project" value="MGI"/>
</dbReference>
<dbReference type="GO" id="GO:0042267">
    <property type="term" value="P:natural killer cell mediated cytotoxicity"/>
    <property type="evidence" value="ECO:0000315"/>
    <property type="project" value="MGI"/>
</dbReference>
<dbReference type="GO" id="GO:0043312">
    <property type="term" value="P:neutrophil degranulation"/>
    <property type="evidence" value="ECO:0000315"/>
    <property type="project" value="MGI"/>
</dbReference>
<dbReference type="GO" id="GO:0001913">
    <property type="term" value="P:T cell mediated cytotoxicity"/>
    <property type="evidence" value="ECO:0000315"/>
    <property type="project" value="MGI"/>
</dbReference>
<dbReference type="CDD" id="cd15878">
    <property type="entry name" value="SNARE_syntaxin11"/>
    <property type="match status" value="1"/>
</dbReference>
<dbReference type="CDD" id="cd00179">
    <property type="entry name" value="SynN"/>
    <property type="match status" value="1"/>
</dbReference>
<dbReference type="FunFam" id="1.20.58.70:FF:000015">
    <property type="entry name" value="Syntaxin 11"/>
    <property type="match status" value="1"/>
</dbReference>
<dbReference type="FunFam" id="1.20.5.110:FF:000022">
    <property type="entry name" value="Syntaxin 19"/>
    <property type="match status" value="1"/>
</dbReference>
<dbReference type="Gene3D" id="1.20.5.110">
    <property type="match status" value="1"/>
</dbReference>
<dbReference type="Gene3D" id="1.20.58.70">
    <property type="match status" value="1"/>
</dbReference>
<dbReference type="InterPro" id="IPR010989">
    <property type="entry name" value="SNARE"/>
</dbReference>
<dbReference type="InterPro" id="IPR045242">
    <property type="entry name" value="Syntaxin"/>
</dbReference>
<dbReference type="InterPro" id="IPR006012">
    <property type="entry name" value="Syntaxin/epimorphin_CS"/>
</dbReference>
<dbReference type="InterPro" id="IPR042781">
    <property type="entry name" value="Syntaxin11_SNARE"/>
</dbReference>
<dbReference type="InterPro" id="IPR006011">
    <property type="entry name" value="Syntaxin_N"/>
</dbReference>
<dbReference type="InterPro" id="IPR000727">
    <property type="entry name" value="T_SNARE_dom"/>
</dbReference>
<dbReference type="PANTHER" id="PTHR19957">
    <property type="entry name" value="SYNTAXIN"/>
    <property type="match status" value="1"/>
</dbReference>
<dbReference type="PANTHER" id="PTHR19957:SF30">
    <property type="entry name" value="SYNTAXIN-11"/>
    <property type="match status" value="1"/>
</dbReference>
<dbReference type="Pfam" id="PF00804">
    <property type="entry name" value="Syntaxin"/>
    <property type="match status" value="1"/>
</dbReference>
<dbReference type="SMART" id="SM00503">
    <property type="entry name" value="SynN"/>
    <property type="match status" value="1"/>
</dbReference>
<dbReference type="SMART" id="SM00397">
    <property type="entry name" value="t_SNARE"/>
    <property type="match status" value="1"/>
</dbReference>
<dbReference type="SUPFAM" id="SSF47661">
    <property type="entry name" value="t-snare proteins"/>
    <property type="match status" value="1"/>
</dbReference>
<dbReference type="PROSITE" id="PS00914">
    <property type="entry name" value="SYNTAXIN"/>
    <property type="match status" value="1"/>
</dbReference>
<dbReference type="PROSITE" id="PS50192">
    <property type="entry name" value="T_SNARE"/>
    <property type="match status" value="1"/>
</dbReference>
<protein>
    <recommendedName>
        <fullName>Syntaxin-11</fullName>
    </recommendedName>
</protein>
<evidence type="ECO:0000250" key="1"/>
<evidence type="ECO:0000255" key="2"/>
<evidence type="ECO:0000255" key="3">
    <source>
        <dbReference type="PROSITE-ProRule" id="PRU00202"/>
    </source>
</evidence>
<evidence type="ECO:0000305" key="4"/>
<name>STX11_MOUSE</name>
<organism>
    <name type="scientific">Mus musculus</name>
    <name type="common">Mouse</name>
    <dbReference type="NCBI Taxonomy" id="10090"/>
    <lineage>
        <taxon>Eukaryota</taxon>
        <taxon>Metazoa</taxon>
        <taxon>Chordata</taxon>
        <taxon>Craniata</taxon>
        <taxon>Vertebrata</taxon>
        <taxon>Euteleostomi</taxon>
        <taxon>Mammalia</taxon>
        <taxon>Eutheria</taxon>
        <taxon>Euarchontoglires</taxon>
        <taxon>Glires</taxon>
        <taxon>Rodentia</taxon>
        <taxon>Myomorpha</taxon>
        <taxon>Muroidea</taxon>
        <taxon>Muridae</taxon>
        <taxon>Murinae</taxon>
        <taxon>Mus</taxon>
        <taxon>Mus</taxon>
    </lineage>
</organism>
<gene>
    <name type="primary">Stx11</name>
</gene>
<accession>Q9D3G5</accession>
<reference key="1">
    <citation type="journal article" date="2005" name="Science">
        <title>The transcriptional landscape of the mammalian genome.</title>
        <authorList>
            <person name="Carninci P."/>
            <person name="Kasukawa T."/>
            <person name="Katayama S."/>
            <person name="Gough J."/>
            <person name="Frith M.C."/>
            <person name="Maeda N."/>
            <person name="Oyama R."/>
            <person name="Ravasi T."/>
            <person name="Lenhard B."/>
            <person name="Wells C."/>
            <person name="Kodzius R."/>
            <person name="Shimokawa K."/>
            <person name="Bajic V.B."/>
            <person name="Brenner S.E."/>
            <person name="Batalov S."/>
            <person name="Forrest A.R."/>
            <person name="Zavolan M."/>
            <person name="Davis M.J."/>
            <person name="Wilming L.G."/>
            <person name="Aidinis V."/>
            <person name="Allen J.E."/>
            <person name="Ambesi-Impiombato A."/>
            <person name="Apweiler R."/>
            <person name="Aturaliya R.N."/>
            <person name="Bailey T.L."/>
            <person name="Bansal M."/>
            <person name="Baxter L."/>
            <person name="Beisel K.W."/>
            <person name="Bersano T."/>
            <person name="Bono H."/>
            <person name="Chalk A.M."/>
            <person name="Chiu K.P."/>
            <person name="Choudhary V."/>
            <person name="Christoffels A."/>
            <person name="Clutterbuck D.R."/>
            <person name="Crowe M.L."/>
            <person name="Dalla E."/>
            <person name="Dalrymple B.P."/>
            <person name="de Bono B."/>
            <person name="Della Gatta G."/>
            <person name="di Bernardo D."/>
            <person name="Down T."/>
            <person name="Engstrom P."/>
            <person name="Fagiolini M."/>
            <person name="Faulkner G."/>
            <person name="Fletcher C.F."/>
            <person name="Fukushima T."/>
            <person name="Furuno M."/>
            <person name="Futaki S."/>
            <person name="Gariboldi M."/>
            <person name="Georgii-Hemming P."/>
            <person name="Gingeras T.R."/>
            <person name="Gojobori T."/>
            <person name="Green R.E."/>
            <person name="Gustincich S."/>
            <person name="Harbers M."/>
            <person name="Hayashi Y."/>
            <person name="Hensch T.K."/>
            <person name="Hirokawa N."/>
            <person name="Hill D."/>
            <person name="Huminiecki L."/>
            <person name="Iacono M."/>
            <person name="Ikeo K."/>
            <person name="Iwama A."/>
            <person name="Ishikawa T."/>
            <person name="Jakt M."/>
            <person name="Kanapin A."/>
            <person name="Katoh M."/>
            <person name="Kawasawa Y."/>
            <person name="Kelso J."/>
            <person name="Kitamura H."/>
            <person name="Kitano H."/>
            <person name="Kollias G."/>
            <person name="Krishnan S.P."/>
            <person name="Kruger A."/>
            <person name="Kummerfeld S.K."/>
            <person name="Kurochkin I.V."/>
            <person name="Lareau L.F."/>
            <person name="Lazarevic D."/>
            <person name="Lipovich L."/>
            <person name="Liu J."/>
            <person name="Liuni S."/>
            <person name="McWilliam S."/>
            <person name="Madan Babu M."/>
            <person name="Madera M."/>
            <person name="Marchionni L."/>
            <person name="Matsuda H."/>
            <person name="Matsuzawa S."/>
            <person name="Miki H."/>
            <person name="Mignone F."/>
            <person name="Miyake S."/>
            <person name="Morris K."/>
            <person name="Mottagui-Tabar S."/>
            <person name="Mulder N."/>
            <person name="Nakano N."/>
            <person name="Nakauchi H."/>
            <person name="Ng P."/>
            <person name="Nilsson R."/>
            <person name="Nishiguchi S."/>
            <person name="Nishikawa S."/>
            <person name="Nori F."/>
            <person name="Ohara O."/>
            <person name="Okazaki Y."/>
            <person name="Orlando V."/>
            <person name="Pang K.C."/>
            <person name="Pavan W.J."/>
            <person name="Pavesi G."/>
            <person name="Pesole G."/>
            <person name="Petrovsky N."/>
            <person name="Piazza S."/>
            <person name="Reed J."/>
            <person name="Reid J.F."/>
            <person name="Ring B.Z."/>
            <person name="Ringwald M."/>
            <person name="Rost B."/>
            <person name="Ruan Y."/>
            <person name="Salzberg S.L."/>
            <person name="Sandelin A."/>
            <person name="Schneider C."/>
            <person name="Schoenbach C."/>
            <person name="Sekiguchi K."/>
            <person name="Semple C.A."/>
            <person name="Seno S."/>
            <person name="Sessa L."/>
            <person name="Sheng Y."/>
            <person name="Shibata Y."/>
            <person name="Shimada H."/>
            <person name="Shimada K."/>
            <person name="Silva D."/>
            <person name="Sinclair B."/>
            <person name="Sperling S."/>
            <person name="Stupka E."/>
            <person name="Sugiura K."/>
            <person name="Sultana R."/>
            <person name="Takenaka Y."/>
            <person name="Taki K."/>
            <person name="Tammoja K."/>
            <person name="Tan S.L."/>
            <person name="Tang S."/>
            <person name="Taylor M.S."/>
            <person name="Tegner J."/>
            <person name="Teichmann S.A."/>
            <person name="Ueda H.R."/>
            <person name="van Nimwegen E."/>
            <person name="Verardo R."/>
            <person name="Wei C.L."/>
            <person name="Yagi K."/>
            <person name="Yamanishi H."/>
            <person name="Zabarovsky E."/>
            <person name="Zhu S."/>
            <person name="Zimmer A."/>
            <person name="Hide W."/>
            <person name="Bult C."/>
            <person name="Grimmond S.M."/>
            <person name="Teasdale R.D."/>
            <person name="Liu E.T."/>
            <person name="Brusic V."/>
            <person name="Quackenbush J."/>
            <person name="Wahlestedt C."/>
            <person name="Mattick J.S."/>
            <person name="Hume D.A."/>
            <person name="Kai C."/>
            <person name="Sasaki D."/>
            <person name="Tomaru Y."/>
            <person name="Fukuda S."/>
            <person name="Kanamori-Katayama M."/>
            <person name="Suzuki M."/>
            <person name="Aoki J."/>
            <person name="Arakawa T."/>
            <person name="Iida J."/>
            <person name="Imamura K."/>
            <person name="Itoh M."/>
            <person name="Kato T."/>
            <person name="Kawaji H."/>
            <person name="Kawagashira N."/>
            <person name="Kawashima T."/>
            <person name="Kojima M."/>
            <person name="Kondo S."/>
            <person name="Konno H."/>
            <person name="Nakano K."/>
            <person name="Ninomiya N."/>
            <person name="Nishio T."/>
            <person name="Okada M."/>
            <person name="Plessy C."/>
            <person name="Shibata K."/>
            <person name="Shiraki T."/>
            <person name="Suzuki S."/>
            <person name="Tagami M."/>
            <person name="Waki K."/>
            <person name="Watahiki A."/>
            <person name="Okamura-Oho Y."/>
            <person name="Suzuki H."/>
            <person name="Kawai J."/>
            <person name="Hayashizaki Y."/>
        </authorList>
    </citation>
    <scope>NUCLEOTIDE SEQUENCE [LARGE SCALE MRNA]</scope>
    <source>
        <strain>C57BL/6J</strain>
        <tissue>Thymus</tissue>
    </source>
</reference>
<reference key="2">
    <citation type="journal article" date="2010" name="Cell">
        <title>A tissue-specific atlas of mouse protein phosphorylation and expression.</title>
        <authorList>
            <person name="Huttlin E.L."/>
            <person name="Jedrychowski M.P."/>
            <person name="Elias J.E."/>
            <person name="Goswami T."/>
            <person name="Rad R."/>
            <person name="Beausoleil S.A."/>
            <person name="Villen J."/>
            <person name="Haas W."/>
            <person name="Sowa M.E."/>
            <person name="Gygi S.P."/>
        </authorList>
    </citation>
    <scope>IDENTIFICATION BY MASS SPECTROMETRY [LARGE SCALE ANALYSIS]</scope>
    <source>
        <tissue>Lung</tissue>
        <tissue>Spleen</tissue>
    </source>
</reference>
<keyword id="KW-0175">Coiled coil</keyword>
<keyword id="KW-0333">Golgi apparatus</keyword>
<keyword id="KW-0472">Membrane</keyword>
<keyword id="KW-0653">Protein transport</keyword>
<keyword id="KW-1185">Reference proteome</keyword>
<keyword id="KW-0813">Transport</keyword>
<sequence length="287" mass="33369">MKDRLAELQELSRSYDQQFPDGDNDFDAPREDIVFETDNILESLYRVIQDIQDENQLLLIDVRRLGRQNVRFLTSMRRLSSIKRDTNSIAKAIKTRGEGIHQKLRSMKELSEQAEARHGAHSAVARISHAQYSALARAFQQAMYEYNQAEMKQRDNCKIRIQRQLEIMGKDMSGEQIEDMFEQGKWDVFSENLLADLKGARAALNEIESRHRELLRLEGRIRDVHELFLQMAVLVEKQEDTLNVIELNVQKTLDYTGEAKAQVRKAVQYKKKNPCRTICCFCCPCVN</sequence>
<proteinExistence type="evidence at protein level"/>